<feature type="chain" id="PRO_0000252299" description="ASTRA-associated protein 1">
    <location>
        <begin position="1"/>
        <end position="443"/>
    </location>
</feature>
<feature type="repeat" description="WD 1">
    <location>
        <begin position="23"/>
        <end position="67"/>
    </location>
</feature>
<feature type="repeat" description="WD 2">
    <location>
        <begin position="71"/>
        <end position="110"/>
    </location>
</feature>
<feature type="repeat" description="WD 3">
    <location>
        <begin position="258"/>
        <end position="295"/>
    </location>
</feature>
<feature type="repeat" description="WD 4">
    <location>
        <begin position="318"/>
        <end position="359"/>
    </location>
</feature>
<feature type="region of interest" description="Disordered" evidence="2">
    <location>
        <begin position="372"/>
        <end position="391"/>
    </location>
</feature>
<feature type="compositionally biased region" description="Low complexity" evidence="2">
    <location>
        <begin position="378"/>
        <end position="391"/>
    </location>
</feature>
<name>ASA1_YEAST</name>
<comment type="function">
    <text>Component of the ASTRA complex involved in chromatin remodeling.</text>
</comment>
<comment type="subunit">
    <text evidence="3">Component of the ASTRA chromatin-remodeling machinery complex composed of at least ASA1, RVB1, RVB2, TRA1, TEL2, TT1 and TTI2.</text>
</comment>
<comment type="subcellular location">
    <subcellularLocation>
        <location evidence="1">Nucleus</location>
    </subcellularLocation>
</comment>
<comment type="similarity">
    <text evidence="4">Belongs to the WD repeat ASA1 family.</text>
</comment>
<comment type="sequence caution" evidence="4">
    <conflict type="erroneous initiation">
        <sequence resource="EMBL-CDS" id="AAB68134"/>
    </conflict>
    <text>Extended N-terminus.</text>
</comment>
<protein>
    <recommendedName>
        <fullName>ASTRA-associated protein 1</fullName>
    </recommendedName>
</protein>
<organism>
    <name type="scientific">Saccharomyces cerevisiae (strain ATCC 204508 / S288c)</name>
    <name type="common">Baker's yeast</name>
    <dbReference type="NCBI Taxonomy" id="559292"/>
    <lineage>
        <taxon>Eukaryota</taxon>
        <taxon>Fungi</taxon>
        <taxon>Dikarya</taxon>
        <taxon>Ascomycota</taxon>
        <taxon>Saccharomycotina</taxon>
        <taxon>Saccharomycetes</taxon>
        <taxon>Saccharomycetales</taxon>
        <taxon>Saccharomycetaceae</taxon>
        <taxon>Saccharomyces</taxon>
    </lineage>
</organism>
<sequence length="443" mass="50563">MRGFSNEIILKRTLTLSDFTLRYHKRGITALQVIKAPSVSNVPVLLSGDNYGYFVMWDLVTKRPITHIEIEGNSHIIAFWWVETTNVLYILSKDSMLRIFELDSSTQLSIDLVRKLSQANKTDHLQWTKIYEMPINTLNFANFIIEAEVKPTKDNKSYRLVCCHTDDSETIDIYQIIEDSTFKLKRPFNNINFPRFLKQQNFLGISKDSKFGIIMRFAKLNDVIFLGYENGFVVGFKITFDEGLQRDIAELVHVSNDHYPNPILDMCVSGDELYSCSTDDFITKYKIPVNLQLETKYLRDDALLIKCPSSLRVSEPSKVHLPLKNIGHIDKVKDDYLVVSSWSGMTIVYNMRTSEVEQTFVKSKNNLVVSDSSMGDLTNGSGSNTESSSKSHNYKVGAMTCLESFDVQSDGLRLGQLRRIKALAKCNWCLIGYEDGTIKLNKI</sequence>
<dbReference type="EMBL" id="U51033">
    <property type="protein sequence ID" value="AAB68134.1"/>
    <property type="status" value="ALT_INIT"/>
    <property type="molecule type" value="Genomic_DNA"/>
</dbReference>
<dbReference type="EMBL" id="BK006949">
    <property type="protein sequence ID" value="DAA11503.1"/>
    <property type="molecule type" value="Genomic_DNA"/>
</dbReference>
<dbReference type="PIR" id="S69071">
    <property type="entry name" value="S69071"/>
</dbReference>
<dbReference type="RefSeq" id="NP_015410.2">
    <property type="nucleotide sequence ID" value="NM_001184182.1"/>
</dbReference>
<dbReference type="BioGRID" id="36256">
    <property type="interactions" value="548"/>
</dbReference>
<dbReference type="DIP" id="DIP-3886N"/>
<dbReference type="FunCoup" id="Q06822">
    <property type="interactions" value="73"/>
</dbReference>
<dbReference type="IntAct" id="Q06822">
    <property type="interactions" value="4"/>
</dbReference>
<dbReference type="STRING" id="4932.YPR085C"/>
<dbReference type="iPTMnet" id="Q06822"/>
<dbReference type="PaxDb" id="4932-YPR085C"/>
<dbReference type="PeptideAtlas" id="Q06822"/>
<dbReference type="EnsemblFungi" id="YPR085C_mRNA">
    <property type="protein sequence ID" value="YPR085C"/>
    <property type="gene ID" value="YPR085C"/>
</dbReference>
<dbReference type="GeneID" id="856200"/>
<dbReference type="KEGG" id="sce:YPR085C"/>
<dbReference type="AGR" id="SGD:S000006289"/>
<dbReference type="SGD" id="S000006289">
    <property type="gene designation" value="ASA1"/>
</dbReference>
<dbReference type="VEuPathDB" id="FungiDB:YPR085C"/>
<dbReference type="eggNOG" id="ENOG502QU4T">
    <property type="taxonomic scope" value="Eukaryota"/>
</dbReference>
<dbReference type="HOGENOM" id="CLU_045414_1_0_1"/>
<dbReference type="InParanoid" id="Q06822"/>
<dbReference type="OMA" id="LVCCNTQ"/>
<dbReference type="OrthoDB" id="7668193at2759"/>
<dbReference type="BioCyc" id="YEAST:G3O-34229-MONOMER"/>
<dbReference type="BioGRID-ORCS" id="856200">
    <property type="hits" value="0 hits in 10 CRISPR screens"/>
</dbReference>
<dbReference type="PRO" id="PR:Q06822"/>
<dbReference type="Proteomes" id="UP000002311">
    <property type="component" value="Chromosome XVI"/>
</dbReference>
<dbReference type="RNAct" id="Q06822">
    <property type="molecule type" value="protein"/>
</dbReference>
<dbReference type="GO" id="GO:0005634">
    <property type="term" value="C:nucleus"/>
    <property type="evidence" value="ECO:0007669"/>
    <property type="project" value="UniProtKB-SubCell"/>
</dbReference>
<dbReference type="GO" id="GO:0110078">
    <property type="term" value="C:TTT Hsp90 cochaperone complex"/>
    <property type="evidence" value="ECO:0007005"/>
    <property type="project" value="SGD"/>
</dbReference>
<dbReference type="GO" id="GO:0006325">
    <property type="term" value="P:chromatin organization"/>
    <property type="evidence" value="ECO:0007669"/>
    <property type="project" value="UniProtKB-KW"/>
</dbReference>
<dbReference type="Gene3D" id="2.130.10.10">
    <property type="entry name" value="YVTN repeat-like/Quinoprotein amine dehydrogenase"/>
    <property type="match status" value="1"/>
</dbReference>
<dbReference type="InterPro" id="IPR015943">
    <property type="entry name" value="WD40/YVTN_repeat-like_dom_sf"/>
</dbReference>
<dbReference type="InterPro" id="IPR036322">
    <property type="entry name" value="WD40_repeat_dom_sf"/>
</dbReference>
<dbReference type="PANTHER" id="PTHR19854:SF1">
    <property type="entry name" value="GUANINE NUCLEOTIDE-BINDING PROTEIN SUBUNIT BETA-LIKE PROTEIN 1"/>
    <property type="match status" value="1"/>
</dbReference>
<dbReference type="PANTHER" id="PTHR19854">
    <property type="entry name" value="TRANSDUCIN BETA-LIKE 3"/>
    <property type="match status" value="1"/>
</dbReference>
<dbReference type="SUPFAM" id="SSF50978">
    <property type="entry name" value="WD40 repeat-like"/>
    <property type="match status" value="1"/>
</dbReference>
<keyword id="KW-0156">Chromatin regulator</keyword>
<keyword id="KW-0539">Nucleus</keyword>
<keyword id="KW-1185">Reference proteome</keyword>
<keyword id="KW-0677">Repeat</keyword>
<keyword id="KW-0853">WD repeat</keyword>
<evidence type="ECO:0000250" key="1"/>
<evidence type="ECO:0000256" key="2">
    <source>
        <dbReference type="SAM" id="MobiDB-lite"/>
    </source>
</evidence>
<evidence type="ECO:0000269" key="3">
    <source>
    </source>
</evidence>
<evidence type="ECO:0000305" key="4"/>
<accession>Q06822</accession>
<accession>D6W487</accession>
<reference key="1">
    <citation type="journal article" date="1997" name="Nature">
        <title>The nucleotide sequence of Saccharomyces cerevisiae chromosome XVI.</title>
        <authorList>
            <person name="Bussey H."/>
            <person name="Storms R.K."/>
            <person name="Ahmed A."/>
            <person name="Albermann K."/>
            <person name="Allen E."/>
            <person name="Ansorge W."/>
            <person name="Araujo R."/>
            <person name="Aparicio A."/>
            <person name="Barrell B.G."/>
            <person name="Badcock K."/>
            <person name="Benes V."/>
            <person name="Botstein D."/>
            <person name="Bowman S."/>
            <person name="Brueckner M."/>
            <person name="Carpenter J."/>
            <person name="Cherry J.M."/>
            <person name="Chung E."/>
            <person name="Churcher C.M."/>
            <person name="Coster F."/>
            <person name="Davis K."/>
            <person name="Davis R.W."/>
            <person name="Dietrich F.S."/>
            <person name="Delius H."/>
            <person name="DiPaolo T."/>
            <person name="Dubois E."/>
            <person name="Duesterhoeft A."/>
            <person name="Duncan M."/>
            <person name="Floeth M."/>
            <person name="Fortin N."/>
            <person name="Friesen J.D."/>
            <person name="Fritz C."/>
            <person name="Goffeau A."/>
            <person name="Hall J."/>
            <person name="Hebling U."/>
            <person name="Heumann K."/>
            <person name="Hilbert H."/>
            <person name="Hillier L.W."/>
            <person name="Hunicke-Smith S."/>
            <person name="Hyman R.W."/>
            <person name="Johnston M."/>
            <person name="Kalman S."/>
            <person name="Kleine K."/>
            <person name="Komp C."/>
            <person name="Kurdi O."/>
            <person name="Lashkari D."/>
            <person name="Lew H."/>
            <person name="Lin A."/>
            <person name="Lin D."/>
            <person name="Louis E.J."/>
            <person name="Marathe R."/>
            <person name="Messenguy F."/>
            <person name="Mewes H.-W."/>
            <person name="Mirtipati S."/>
            <person name="Moestl D."/>
            <person name="Mueller-Auer S."/>
            <person name="Namath A."/>
            <person name="Nentwich U."/>
            <person name="Oefner P."/>
            <person name="Pearson D."/>
            <person name="Petel F.X."/>
            <person name="Pohl T.M."/>
            <person name="Purnelle B."/>
            <person name="Rajandream M.A."/>
            <person name="Rechmann S."/>
            <person name="Rieger M."/>
            <person name="Riles L."/>
            <person name="Roberts D."/>
            <person name="Schaefer M."/>
            <person name="Scharfe M."/>
            <person name="Scherens B."/>
            <person name="Schramm S."/>
            <person name="Schroeder M."/>
            <person name="Sdicu A.-M."/>
            <person name="Tettelin H."/>
            <person name="Urrestarazu L.A."/>
            <person name="Ushinsky S."/>
            <person name="Vierendeels F."/>
            <person name="Vissers S."/>
            <person name="Voss H."/>
            <person name="Walsh S.V."/>
            <person name="Wambutt R."/>
            <person name="Wang Y."/>
            <person name="Wedler E."/>
            <person name="Wedler H."/>
            <person name="Winnett E."/>
            <person name="Zhong W.-W."/>
            <person name="Zollner A."/>
            <person name="Vo D.H."/>
            <person name="Hani J."/>
        </authorList>
    </citation>
    <scope>NUCLEOTIDE SEQUENCE [LARGE SCALE GENOMIC DNA]</scope>
    <source>
        <strain>ATCC 204508 / S288c</strain>
    </source>
</reference>
<reference key="2">
    <citation type="journal article" date="2014" name="G3 (Bethesda)">
        <title>The reference genome sequence of Saccharomyces cerevisiae: Then and now.</title>
        <authorList>
            <person name="Engel S.R."/>
            <person name="Dietrich F.S."/>
            <person name="Fisk D.G."/>
            <person name="Binkley G."/>
            <person name="Balakrishnan R."/>
            <person name="Costanzo M.C."/>
            <person name="Dwight S.S."/>
            <person name="Hitz B.C."/>
            <person name="Karra K."/>
            <person name="Nash R.S."/>
            <person name="Weng S."/>
            <person name="Wong E.D."/>
            <person name="Lloyd P."/>
            <person name="Skrzypek M.S."/>
            <person name="Miyasato S.R."/>
            <person name="Simison M."/>
            <person name="Cherry J.M."/>
        </authorList>
    </citation>
    <scope>GENOME REANNOTATION</scope>
    <source>
        <strain>ATCC 204508 / S288c</strain>
    </source>
</reference>
<reference key="3">
    <citation type="journal article" date="2008" name="Genome Biol.">
        <title>Chromatin Central: towards the comparative proteome by accurate mapping of the yeast proteomic environment.</title>
        <authorList>
            <person name="Shevchenko A."/>
            <person name="Roguev A."/>
            <person name="Schaft D."/>
            <person name="Buchanan L."/>
            <person name="Habermann B."/>
            <person name="Sakalar C."/>
            <person name="Thomas H."/>
            <person name="Krogan N.J."/>
            <person name="Shevchenko A."/>
            <person name="Stewart A.F."/>
        </authorList>
    </citation>
    <scope>IDENTIFICATION IN THE ASTRA COMPLEX</scope>
    <scope>IDENTIFICATION BY MASS SPECTROMETRY</scope>
</reference>
<reference key="4">
    <citation type="journal article" date="2003" name="Nature">
        <title>Sequencing and comparison of yeast species to identify genes and regulatory elements.</title>
        <authorList>
            <person name="Kellis M."/>
            <person name="Patterson N."/>
            <person name="Endrizzi M."/>
            <person name="Birren B.W."/>
            <person name="Lander E.S."/>
        </authorList>
    </citation>
    <scope>IDENTIFICATION OF PROBABLE INITIATION SITE</scope>
</reference>
<gene>
    <name type="primary">ASA1</name>
    <name type="ordered locus">YPR085C</name>
</gene>
<proteinExistence type="evidence at protein level"/>